<reference key="1">
    <citation type="journal article" date="2002" name="Proc. Natl. Acad. Sci. U.S.A.">
        <title>Genome sequence of a serotype M3 strain of group A Streptococcus: phage-encoded toxins, the high-virulence phenotype, and clone emergence.</title>
        <authorList>
            <person name="Beres S.B."/>
            <person name="Sylva G.L."/>
            <person name="Barbian K.D."/>
            <person name="Lei B."/>
            <person name="Hoff J.S."/>
            <person name="Mammarella N.D."/>
            <person name="Liu M.-Y."/>
            <person name="Smoot J.C."/>
            <person name="Porcella S.F."/>
            <person name="Parkins L.D."/>
            <person name="Campbell D.S."/>
            <person name="Smith T.M."/>
            <person name="McCormick J.K."/>
            <person name="Leung D.Y.M."/>
            <person name="Schlievert P.M."/>
            <person name="Musser J.M."/>
        </authorList>
    </citation>
    <scope>NUCLEOTIDE SEQUENCE [LARGE SCALE GENOMIC DNA]</scope>
    <source>
        <strain>ATCC BAA-595 / MGAS315</strain>
    </source>
</reference>
<protein>
    <recommendedName>
        <fullName>UPF0337 protein SpyM3_0896</fullName>
    </recommendedName>
</protein>
<sequence>MSDEKYNAKLDQAGGKLKEGFGKISGDKSLETEGKVDKVTGKVKEVIADAKDTVKGLAKGLDNKDK</sequence>
<proteinExistence type="inferred from homology"/>
<accession>P0DH06</accession>
<accession>Q79X30</accession>
<accession>Q7CF26</accession>
<gene>
    <name type="ordered locus">SpyM3_0896</name>
</gene>
<feature type="chain" id="PRO_0000210052" description="UPF0337 protein SpyM3_0896">
    <location>
        <begin position="1"/>
        <end position="66"/>
    </location>
</feature>
<evidence type="ECO:0000305" key="1"/>
<comment type="similarity">
    <text evidence="1">Belongs to the UPF0337 (CsbD) family.</text>
</comment>
<dbReference type="EMBL" id="AE014074">
    <property type="protein sequence ID" value="AAM79503.1"/>
    <property type="molecule type" value="Genomic_DNA"/>
</dbReference>
<dbReference type="RefSeq" id="WP_002984476.1">
    <property type="nucleotide sequence ID" value="NC_004070.1"/>
</dbReference>
<dbReference type="SMR" id="P0DH06"/>
<dbReference type="KEGG" id="spg:SpyM3_0896"/>
<dbReference type="HOGENOM" id="CLU_135567_0_0_9"/>
<dbReference type="Proteomes" id="UP000000564">
    <property type="component" value="Chromosome"/>
</dbReference>
<dbReference type="Gene3D" id="1.10.1470.10">
    <property type="entry name" value="YjbJ"/>
    <property type="match status" value="1"/>
</dbReference>
<dbReference type="InterPro" id="IPR008462">
    <property type="entry name" value="CsbD"/>
</dbReference>
<dbReference type="InterPro" id="IPR036629">
    <property type="entry name" value="YjbJ_sf"/>
</dbReference>
<dbReference type="Pfam" id="PF05532">
    <property type="entry name" value="CsbD"/>
    <property type="match status" value="1"/>
</dbReference>
<dbReference type="SUPFAM" id="SSF69047">
    <property type="entry name" value="Hypothetical protein YjbJ"/>
    <property type="match status" value="1"/>
</dbReference>
<name>Y896_STRP3</name>
<organism>
    <name type="scientific">Streptococcus pyogenes serotype M3 (strain ATCC BAA-595 / MGAS315)</name>
    <dbReference type="NCBI Taxonomy" id="198466"/>
    <lineage>
        <taxon>Bacteria</taxon>
        <taxon>Bacillati</taxon>
        <taxon>Bacillota</taxon>
        <taxon>Bacilli</taxon>
        <taxon>Lactobacillales</taxon>
        <taxon>Streptococcaceae</taxon>
        <taxon>Streptococcus</taxon>
    </lineage>
</organism>